<organism>
    <name type="scientific">Thermococcus sibiricus (strain DSM 12597 / MM 739)</name>
    <dbReference type="NCBI Taxonomy" id="604354"/>
    <lineage>
        <taxon>Archaea</taxon>
        <taxon>Methanobacteriati</taxon>
        <taxon>Methanobacteriota</taxon>
        <taxon>Thermococci</taxon>
        <taxon>Thermococcales</taxon>
        <taxon>Thermococcaceae</taxon>
        <taxon>Thermococcus</taxon>
    </lineage>
</organism>
<keyword id="KW-0030">Aminoacyl-tRNA synthetase</keyword>
<keyword id="KW-0067">ATP-binding</keyword>
<keyword id="KW-0963">Cytoplasm</keyword>
<keyword id="KW-0436">Ligase</keyword>
<keyword id="KW-0547">Nucleotide-binding</keyword>
<keyword id="KW-0648">Protein biosynthesis</keyword>
<keyword id="KW-1185">Reference proteome</keyword>
<sequence length="384" mass="44610">MPEFEVTPWEVTGVVDYNKLIEEFGTTPLTDDLLKKTEELTKKELPMYFKRKFFFSHRDYDLVLKDYEAGKGFFLYTGRGPSGPMHIGHIIPFFATKWLQENFGVNLYVQITDDEKFLFKPQLTFEGTKRWAYENILDIIAVGFDPDKTFIFQDSEFTKIYEMAIPIAKKVTYSMAKAVFGFNEQSKIGMIFFPAIQAAPTFFEEKRSLIPAAIDQDPYWRIQRDFAESLGYYKTAALHSKFVPGLMGLGGKMSASKPETAIYLTDDPEEAGKKIWKYALTGGRATAKEQRELGGEPDKCVVFKWLEIFFEPDEKKLLERYIACKNGEILCGQCKRYLIEKVQNFLKEHQEKREKAKKEIEKFKYTGDLAREQWDKAIPEPLRK</sequence>
<proteinExistence type="inferred from homology"/>
<gene>
    <name evidence="1" type="primary">trpS</name>
    <name type="ordered locus">TSIB_1964</name>
</gene>
<reference key="1">
    <citation type="journal article" date="2009" name="Appl. Environ. Microbiol.">
        <title>Metabolic versatility and indigenous origin of the archaeon Thermococcus sibiricus, isolated from a siberian oil reservoir, as revealed by genome analysis.</title>
        <authorList>
            <person name="Mardanov A.V."/>
            <person name="Ravin N.V."/>
            <person name="Svetlitchnyi V.A."/>
            <person name="Beletsky A.V."/>
            <person name="Miroshnichenko M.L."/>
            <person name="Bonch-Osmolovskaya E.A."/>
            <person name="Skryabin K.G."/>
        </authorList>
    </citation>
    <scope>NUCLEOTIDE SEQUENCE [LARGE SCALE GENOMIC DNA]</scope>
    <source>
        <strain>DSM 12597 / MM 739</strain>
    </source>
</reference>
<protein>
    <recommendedName>
        <fullName evidence="1">Tryptophan--tRNA ligase</fullName>
        <ecNumber evidence="1">6.1.1.2</ecNumber>
    </recommendedName>
    <alternativeName>
        <fullName evidence="1">Tryptophanyl-tRNA synthetase</fullName>
        <shortName evidence="1">TrpRS</shortName>
    </alternativeName>
</protein>
<evidence type="ECO:0000255" key="1">
    <source>
        <dbReference type="HAMAP-Rule" id="MF_00140"/>
    </source>
</evidence>
<name>SYW_THESM</name>
<feature type="chain" id="PRO_1000203257" description="Tryptophan--tRNA ligase">
    <location>
        <begin position="1"/>
        <end position="384"/>
    </location>
</feature>
<feature type="short sequence motif" description="'HIGH' region">
    <location>
        <begin position="81"/>
        <end position="89"/>
    </location>
</feature>
<feature type="short sequence motif" description="'KMSKS' region">
    <location>
        <begin position="252"/>
        <end position="256"/>
    </location>
</feature>
<accession>C6A032</accession>
<dbReference type="EC" id="6.1.1.2" evidence="1"/>
<dbReference type="EMBL" id="CP001463">
    <property type="protein sequence ID" value="ACS91013.1"/>
    <property type="molecule type" value="Genomic_DNA"/>
</dbReference>
<dbReference type="RefSeq" id="WP_015850229.1">
    <property type="nucleotide sequence ID" value="NC_012883.1"/>
</dbReference>
<dbReference type="SMR" id="C6A032"/>
<dbReference type="STRING" id="604354.TSIB_1964"/>
<dbReference type="GeneID" id="8096977"/>
<dbReference type="KEGG" id="tsi:TSIB_1964"/>
<dbReference type="eggNOG" id="arCOG01887">
    <property type="taxonomic scope" value="Archaea"/>
</dbReference>
<dbReference type="HOGENOM" id="CLU_032621_0_1_2"/>
<dbReference type="OrthoDB" id="371821at2157"/>
<dbReference type="Proteomes" id="UP000009079">
    <property type="component" value="Chromosome"/>
</dbReference>
<dbReference type="GO" id="GO:0005737">
    <property type="term" value="C:cytoplasm"/>
    <property type="evidence" value="ECO:0007669"/>
    <property type="project" value="UniProtKB-SubCell"/>
</dbReference>
<dbReference type="GO" id="GO:0005524">
    <property type="term" value="F:ATP binding"/>
    <property type="evidence" value="ECO:0007669"/>
    <property type="project" value="UniProtKB-UniRule"/>
</dbReference>
<dbReference type="GO" id="GO:0004830">
    <property type="term" value="F:tryptophan-tRNA ligase activity"/>
    <property type="evidence" value="ECO:0007669"/>
    <property type="project" value="UniProtKB-UniRule"/>
</dbReference>
<dbReference type="GO" id="GO:0006436">
    <property type="term" value="P:tryptophanyl-tRNA aminoacylation"/>
    <property type="evidence" value="ECO:0007669"/>
    <property type="project" value="UniProtKB-UniRule"/>
</dbReference>
<dbReference type="CDD" id="cd00806">
    <property type="entry name" value="TrpRS_core"/>
    <property type="match status" value="1"/>
</dbReference>
<dbReference type="FunFam" id="1.10.240.10:FF:000007">
    <property type="entry name" value="Tryptophan--tRNA ligase"/>
    <property type="match status" value="1"/>
</dbReference>
<dbReference type="FunFam" id="3.40.50.620:FF:000138">
    <property type="entry name" value="Tryptophan--tRNA ligase"/>
    <property type="match status" value="1"/>
</dbReference>
<dbReference type="Gene3D" id="3.40.50.620">
    <property type="entry name" value="HUPs"/>
    <property type="match status" value="1"/>
</dbReference>
<dbReference type="Gene3D" id="1.10.240.10">
    <property type="entry name" value="Tyrosyl-Transfer RNA Synthetase"/>
    <property type="match status" value="1"/>
</dbReference>
<dbReference type="HAMAP" id="MF_00140_A">
    <property type="entry name" value="Trp_tRNA_synth_A"/>
    <property type="match status" value="1"/>
</dbReference>
<dbReference type="InterPro" id="IPR001412">
    <property type="entry name" value="aa-tRNA-synth_I_CS"/>
</dbReference>
<dbReference type="InterPro" id="IPR002305">
    <property type="entry name" value="aa-tRNA-synth_Ic"/>
</dbReference>
<dbReference type="InterPro" id="IPR014729">
    <property type="entry name" value="Rossmann-like_a/b/a_fold"/>
</dbReference>
<dbReference type="InterPro" id="IPR002306">
    <property type="entry name" value="Trp-tRNA-ligase"/>
</dbReference>
<dbReference type="InterPro" id="IPR020653">
    <property type="entry name" value="Tryptophan-tRNA-ligase_arc"/>
</dbReference>
<dbReference type="NCBIfam" id="NF008924">
    <property type="entry name" value="PRK12285.1-1"/>
    <property type="match status" value="1"/>
</dbReference>
<dbReference type="NCBIfam" id="NF008927">
    <property type="entry name" value="PRK12285.1-4"/>
    <property type="match status" value="1"/>
</dbReference>
<dbReference type="NCBIfam" id="TIGR00233">
    <property type="entry name" value="trpS"/>
    <property type="match status" value="1"/>
</dbReference>
<dbReference type="PANTHER" id="PTHR10055:SF1">
    <property type="entry name" value="TRYPTOPHAN--TRNA LIGASE, CYTOPLASMIC"/>
    <property type="match status" value="1"/>
</dbReference>
<dbReference type="PANTHER" id="PTHR10055">
    <property type="entry name" value="TRYPTOPHANYL-TRNA SYNTHETASE"/>
    <property type="match status" value="1"/>
</dbReference>
<dbReference type="Pfam" id="PF00579">
    <property type="entry name" value="tRNA-synt_1b"/>
    <property type="match status" value="1"/>
</dbReference>
<dbReference type="PRINTS" id="PR01039">
    <property type="entry name" value="TRNASYNTHTRP"/>
</dbReference>
<dbReference type="SUPFAM" id="SSF52374">
    <property type="entry name" value="Nucleotidylyl transferase"/>
    <property type="match status" value="1"/>
</dbReference>
<dbReference type="PROSITE" id="PS00178">
    <property type="entry name" value="AA_TRNA_LIGASE_I"/>
    <property type="match status" value="1"/>
</dbReference>
<comment type="catalytic activity">
    <reaction evidence="1">
        <text>tRNA(Trp) + L-tryptophan + ATP = L-tryptophyl-tRNA(Trp) + AMP + diphosphate + H(+)</text>
        <dbReference type="Rhea" id="RHEA:24080"/>
        <dbReference type="Rhea" id="RHEA-COMP:9671"/>
        <dbReference type="Rhea" id="RHEA-COMP:9705"/>
        <dbReference type="ChEBI" id="CHEBI:15378"/>
        <dbReference type="ChEBI" id="CHEBI:30616"/>
        <dbReference type="ChEBI" id="CHEBI:33019"/>
        <dbReference type="ChEBI" id="CHEBI:57912"/>
        <dbReference type="ChEBI" id="CHEBI:78442"/>
        <dbReference type="ChEBI" id="CHEBI:78535"/>
        <dbReference type="ChEBI" id="CHEBI:456215"/>
        <dbReference type="EC" id="6.1.1.2"/>
    </reaction>
</comment>
<comment type="subcellular location">
    <subcellularLocation>
        <location evidence="1">Cytoplasm</location>
    </subcellularLocation>
</comment>
<comment type="similarity">
    <text evidence="1">Belongs to the class-I aminoacyl-tRNA synthetase family.</text>
</comment>